<protein>
    <recommendedName>
        <fullName>Endosomal protein P24B</fullName>
    </recommendedName>
    <alternativeName>
        <fullName>24 kDa endomembrane protein</fullName>
    </alternativeName>
    <alternativeName>
        <fullName>Basic 24 kDa late endocytic intermediate component</fullName>
    </alternativeName>
</protein>
<feature type="signal peptide" evidence="4 7">
    <location>
        <begin position="1"/>
        <end position="20"/>
    </location>
</feature>
<feature type="chain" id="PRO_0000010407" description="Endosomal protein P24B">
    <location>
        <begin position="21"/>
        <end position="203"/>
    </location>
</feature>
<feature type="topological domain" description="Lumenal" evidence="1">
    <location>
        <begin position="21"/>
        <end position="172"/>
    </location>
</feature>
<feature type="transmembrane region" description="Helical" evidence="1">
    <location>
        <begin position="173"/>
        <end position="193"/>
    </location>
</feature>
<feature type="topological domain" description="Cytoplasmic" evidence="1">
    <location>
        <begin position="194"/>
        <end position="203"/>
    </location>
</feature>
<feature type="domain" description="GOLD" evidence="2">
    <location>
        <begin position="30"/>
        <end position="118"/>
    </location>
</feature>
<feature type="mutagenesis site" description="No change in COPII-binding." evidence="5">
    <original>LV</original>
    <variation>AA</variation>
    <location>
        <begin position="202"/>
        <end position="203"/>
    </location>
</feature>
<feature type="sequence conflict" description="In Ref. 6; AA sequence." evidence="9" ref="6">
    <original>C</original>
    <variation>H</variation>
    <location>
        <position position="32"/>
    </location>
</feature>
<evidence type="ECO:0000255" key="1"/>
<evidence type="ECO:0000255" key="2">
    <source>
        <dbReference type="PROSITE-ProRule" id="PRU00096"/>
    </source>
</evidence>
<evidence type="ECO:0000269" key="3">
    <source>
    </source>
</evidence>
<evidence type="ECO:0000269" key="4">
    <source>
    </source>
</evidence>
<evidence type="ECO:0000269" key="5">
    <source>
    </source>
</evidence>
<evidence type="ECO:0000269" key="6">
    <source>
    </source>
</evidence>
<evidence type="ECO:0000269" key="7">
    <source>
    </source>
</evidence>
<evidence type="ECO:0000269" key="8">
    <source>
    </source>
</evidence>
<evidence type="ECO:0000305" key="9"/>
<comment type="function">
    <text evidence="5">Constituent of COPII-coated endoplasmic reticulum-derived transport vesicles. Required for efficient transport of a subset of secretory proteins to the Golgi.</text>
</comment>
<comment type="subunit">
    <text evidence="3 5 8">Associates with ERV25, ERP1 and ERP2. Also interacts with SAR1, SEC23 and SEC24.</text>
</comment>
<comment type="interaction">
    <interactant intactId="EBI-6431">
        <id>P32803</id>
    </interactant>
    <interactant intactId="EBI-6587">
        <id>P39704</id>
        <label>ERP2</label>
    </interactant>
    <organismsDiffer>false</organismsDiffer>
    <experiments>4</experiments>
</comment>
<comment type="interaction">
    <interactant intactId="EBI-6431">
        <id>P32803</id>
    </interactant>
    <interactant intactId="EBI-6598">
        <id>Q12450</id>
        <label>ERP4</label>
    </interactant>
    <organismsDiffer>false</organismsDiffer>
    <experiments>4</experiments>
</comment>
<comment type="interaction">
    <interactant intactId="EBI-6431">
        <id>P32803</id>
    </interactant>
    <interactant intactId="EBI-6642">
        <id>P54837</id>
        <label>ERV25</label>
    </interactant>
    <organismsDiffer>false</organismsDiffer>
    <experiments>4</experiments>
</comment>
<comment type="subcellular location">
    <subcellularLocation>
        <location evidence="4">Endoplasmic reticulum membrane</location>
        <topology evidence="1">Single-pass type I membrane protein</topology>
    </subcellularLocation>
    <subcellularLocation>
        <location evidence="5">Golgi apparatus membrane</location>
        <topology evidence="1">Single-pass type I membrane protein</topology>
    </subcellularLocation>
    <text evidence="5">Recycles between endoplasmic reticulum and Golgi (PubMed:11560939).</text>
</comment>
<comment type="miscellaneous">
    <text evidence="6">Present with 26800 molecules/cell in log phase SD medium.</text>
</comment>
<comment type="similarity">
    <text evidence="9">Belongs to the EMP24/GP25L family.</text>
</comment>
<reference key="1">
    <citation type="journal article" date="1995" name="EMBO J.">
        <title>The absence of Emp24p, a component of ER-derived COPII-coated vesicles, causes a defect in transport of selected proteins to the Golgi.</title>
        <authorList>
            <person name="Schimmoeller F."/>
            <person name="Singer-Krueger B."/>
            <person name="Schroeder S."/>
            <person name="Krueger U."/>
            <person name="Barlowe C."/>
            <person name="Riezman H."/>
        </authorList>
    </citation>
    <scope>NUCLEOTIDE SEQUENCE [GENOMIC DNA]</scope>
</reference>
<reference key="2">
    <citation type="submission" date="1996-05" db="EMBL/GenBank/DDBJ databases">
        <authorList>
            <person name="Bjourson A.J."/>
            <person name="McReynolds A.D.K."/>
            <person name="Wright L.F."/>
        </authorList>
    </citation>
    <scope>NUCLEOTIDE SEQUENCE [GENOMIC DNA]</scope>
</reference>
<reference key="3">
    <citation type="journal article" date="1997" name="Nature">
        <title>The nucleotide sequence of Saccharomyces cerevisiae chromosome VII.</title>
        <authorList>
            <person name="Tettelin H."/>
            <person name="Agostoni-Carbone M.L."/>
            <person name="Albermann K."/>
            <person name="Albers M."/>
            <person name="Arroyo J."/>
            <person name="Backes U."/>
            <person name="Barreiros T."/>
            <person name="Bertani I."/>
            <person name="Bjourson A.J."/>
            <person name="Brueckner M."/>
            <person name="Bruschi C.V."/>
            <person name="Carignani G."/>
            <person name="Castagnoli L."/>
            <person name="Cerdan E."/>
            <person name="Clemente M.L."/>
            <person name="Coblenz A."/>
            <person name="Coglievina M."/>
            <person name="Coissac E."/>
            <person name="Defoor E."/>
            <person name="Del Bino S."/>
            <person name="Delius H."/>
            <person name="Delneri D."/>
            <person name="de Wergifosse P."/>
            <person name="Dujon B."/>
            <person name="Durand P."/>
            <person name="Entian K.-D."/>
            <person name="Eraso P."/>
            <person name="Escribano V."/>
            <person name="Fabiani L."/>
            <person name="Fartmann B."/>
            <person name="Feroli F."/>
            <person name="Feuermann M."/>
            <person name="Frontali L."/>
            <person name="Garcia-Gonzalez M."/>
            <person name="Garcia-Saez M.I."/>
            <person name="Goffeau A."/>
            <person name="Guerreiro P."/>
            <person name="Hani J."/>
            <person name="Hansen M."/>
            <person name="Hebling U."/>
            <person name="Hernandez K."/>
            <person name="Heumann K."/>
            <person name="Hilger F."/>
            <person name="Hofmann B."/>
            <person name="Indge K.J."/>
            <person name="James C.M."/>
            <person name="Klima R."/>
            <person name="Koetter P."/>
            <person name="Kramer B."/>
            <person name="Kramer W."/>
            <person name="Lauquin G."/>
            <person name="Leuther H."/>
            <person name="Louis E.J."/>
            <person name="Maillier E."/>
            <person name="Marconi A."/>
            <person name="Martegani E."/>
            <person name="Mazon M.J."/>
            <person name="Mazzoni C."/>
            <person name="McReynolds A.D.K."/>
            <person name="Melchioretto P."/>
            <person name="Mewes H.-W."/>
            <person name="Minenkova O."/>
            <person name="Mueller-Auer S."/>
            <person name="Nawrocki A."/>
            <person name="Netter P."/>
            <person name="Neu R."/>
            <person name="Nombela C."/>
            <person name="Oliver S.G."/>
            <person name="Panzeri L."/>
            <person name="Paoluzi S."/>
            <person name="Plevani P."/>
            <person name="Portetelle D."/>
            <person name="Portillo F."/>
            <person name="Potier S."/>
            <person name="Purnelle B."/>
            <person name="Rieger M."/>
            <person name="Riles L."/>
            <person name="Rinaldi T."/>
            <person name="Robben J."/>
            <person name="Rodrigues-Pousada C."/>
            <person name="Rodriguez-Belmonte E."/>
            <person name="Rodriguez-Torres A.M."/>
            <person name="Rose M."/>
            <person name="Ruzzi M."/>
            <person name="Saliola M."/>
            <person name="Sanchez-Perez M."/>
            <person name="Schaefer B."/>
            <person name="Schaefer M."/>
            <person name="Scharfe M."/>
            <person name="Schmidheini T."/>
            <person name="Schreer A."/>
            <person name="Skala J."/>
            <person name="Souciet J.-L."/>
            <person name="Steensma H.Y."/>
            <person name="Talla E."/>
            <person name="Thierry A."/>
            <person name="Vandenbol M."/>
            <person name="van der Aart Q.J.M."/>
            <person name="Van Dyck L."/>
            <person name="Vanoni M."/>
            <person name="Verhasselt P."/>
            <person name="Voet M."/>
            <person name="Volckaert G."/>
            <person name="Wambutt R."/>
            <person name="Watson M.D."/>
            <person name="Weber N."/>
            <person name="Wedler E."/>
            <person name="Wedler H."/>
            <person name="Wipfli P."/>
            <person name="Wolf K."/>
            <person name="Wright L.F."/>
            <person name="Zaccaria P."/>
            <person name="Zimmermann M."/>
            <person name="Zollner A."/>
            <person name="Kleine K."/>
        </authorList>
    </citation>
    <scope>NUCLEOTIDE SEQUENCE [LARGE SCALE GENOMIC DNA]</scope>
    <source>
        <strain>ATCC 204508 / S288c</strain>
    </source>
</reference>
<reference key="4">
    <citation type="journal article" date="2014" name="G3 (Bethesda)">
        <title>The reference genome sequence of Saccharomyces cerevisiae: Then and now.</title>
        <authorList>
            <person name="Engel S.R."/>
            <person name="Dietrich F.S."/>
            <person name="Fisk D.G."/>
            <person name="Binkley G."/>
            <person name="Balakrishnan R."/>
            <person name="Costanzo M.C."/>
            <person name="Dwight S.S."/>
            <person name="Hitz B.C."/>
            <person name="Karra K."/>
            <person name="Nash R.S."/>
            <person name="Weng S."/>
            <person name="Wong E.D."/>
            <person name="Lloyd P."/>
            <person name="Skrzypek M.S."/>
            <person name="Miyasato S.R."/>
            <person name="Simison M."/>
            <person name="Cherry J.M."/>
        </authorList>
    </citation>
    <scope>GENOME REANNOTATION</scope>
    <source>
        <strain>ATCC 204508 / S288c</strain>
    </source>
</reference>
<reference key="5">
    <citation type="journal article" date="1997" name="Yeast">
        <title>Sequencing of a 40.5 kb fragment located on the left arm of chromosome VII from Saccharomyces cerevisiae.</title>
        <authorList>
            <person name="Coglievina M."/>
            <person name="Klima R."/>
            <person name="Bertani I."/>
            <person name="Delneri D."/>
            <person name="Zaccaria P."/>
            <person name="Bruschi C.V."/>
        </authorList>
    </citation>
    <scope>NUCLEOTIDE SEQUENCE [GENOMIC DNA] OF 1-169</scope>
    <source>
        <strain>ATCC 96604 / S288c / FY1679</strain>
    </source>
</reference>
<reference key="6">
    <citation type="journal article" date="1993" name="J. Biol. Chem.">
        <title>Partial purification and characterization of early and late endosomes from yeast. Identification of four novel proteins.</title>
        <authorList>
            <person name="Singer-Krueger B."/>
            <person name="Frank R."/>
            <person name="Crausaz F."/>
            <person name="Riezman H."/>
        </authorList>
    </citation>
    <scope>PROTEIN SEQUENCE OF 21-37</scope>
    <source>
        <strain>RH732</strain>
    </source>
</reference>
<reference key="7">
    <citation type="journal article" date="1996" name="J. Biol. Chem.">
        <title>Erv25p, a component of COPII-coated vesicles, forms a complex with Emp24p that is required for efficient endoplasmic reticulum to Golgi transport.</title>
        <authorList>
            <person name="Belden W.J."/>
            <person name="Barlowe C."/>
        </authorList>
    </citation>
    <scope>INTERACTION WITH ERV25</scope>
</reference>
<reference key="8">
    <citation type="journal article" date="1999" name="Mol. Biol. Cell">
        <title>Erp1p and Erp2p, partners for Emp24p and Erv25p in a yeast p24 complex.</title>
        <authorList>
            <person name="Marzioch M."/>
            <person name="Henthorn D.C."/>
            <person name="Herrmann J.M."/>
            <person name="Wilson R."/>
            <person name="Thomas D.Y."/>
            <person name="Bergeron J.J.M."/>
            <person name="Solari R.C."/>
            <person name="Rowley A."/>
        </authorList>
    </citation>
    <scope>INTERACTION WITH ERV25; ERP1 AND ERP2</scope>
</reference>
<reference key="9">
    <citation type="journal article" date="2000" name="FEBS Lett.">
        <title>Proteins in the early Golgi compartment of Saccharomyces cerevisiae immunoisolated by Sed5p.</title>
        <authorList>
            <person name="Cho J.-H."/>
            <person name="Noda Y."/>
            <person name="Yoda K."/>
        </authorList>
    </citation>
    <scope>PROTEIN SEQUENCE OF 21-25</scope>
    <scope>SUBCELLULAR LOCATION</scope>
</reference>
<reference key="10">
    <citation type="journal article" date="2001" name="J. Biol. Chem.">
        <title>Distinct roles for the cytoplasmic tail sequences of Emp24p and Erv25p in transport between the endoplasmic reticulum and Golgi complex.</title>
        <authorList>
            <person name="Belden W.J."/>
            <person name="Barlowe C."/>
        </authorList>
    </citation>
    <scope>FUNCTION</scope>
    <scope>SUBCELLULAR LOCATION</scope>
    <scope>INTERACTION WITH SAR1; SEC23 AND SEC24</scope>
    <scope>MUTAGENESIS OF 202-LYS-VAL-203</scope>
</reference>
<reference key="11">
    <citation type="journal article" date="2003" name="Nature">
        <title>Global analysis of protein expression in yeast.</title>
        <authorList>
            <person name="Ghaemmaghami S."/>
            <person name="Huh W.-K."/>
            <person name="Bower K."/>
            <person name="Howson R.W."/>
            <person name="Belle A."/>
            <person name="Dephoure N."/>
            <person name="O'Shea E.K."/>
            <person name="Weissman J.S."/>
        </authorList>
    </citation>
    <scope>LEVEL OF PROTEIN EXPRESSION [LARGE SCALE ANALYSIS]</scope>
</reference>
<reference key="12">
    <citation type="journal article" date="2006" name="Proc. Natl. Acad. Sci. U.S.A.">
        <title>A global topology map of the Saccharomyces cerevisiae membrane proteome.</title>
        <authorList>
            <person name="Kim H."/>
            <person name="Melen K."/>
            <person name="Oesterberg M."/>
            <person name="von Heijne G."/>
        </authorList>
    </citation>
    <scope>TOPOLOGY [LARGE SCALE ANALYSIS]</scope>
    <source>
        <strain>ATCC 208353 / W303-1A</strain>
    </source>
</reference>
<organism>
    <name type="scientific">Saccharomyces cerevisiae (strain ATCC 204508 / S288c)</name>
    <name type="common">Baker's yeast</name>
    <dbReference type="NCBI Taxonomy" id="559292"/>
    <lineage>
        <taxon>Eukaryota</taxon>
        <taxon>Fungi</taxon>
        <taxon>Dikarya</taxon>
        <taxon>Ascomycota</taxon>
        <taxon>Saccharomycotina</taxon>
        <taxon>Saccharomycetes</taxon>
        <taxon>Saccharomycetales</taxon>
        <taxon>Saccharomycetaceae</taxon>
        <taxon>Saccharomyces</taxon>
    </lineage>
</organism>
<name>EMP24_YEAST</name>
<gene>
    <name type="primary">EMP24</name>
    <name type="ordered locus">YGL200C</name>
    <name type="ORF">G1271</name>
</gene>
<keyword id="KW-0903">Direct protein sequencing</keyword>
<keyword id="KW-0256">Endoplasmic reticulum</keyword>
<keyword id="KW-0931">ER-Golgi transport</keyword>
<keyword id="KW-0333">Golgi apparatus</keyword>
<keyword id="KW-0472">Membrane</keyword>
<keyword id="KW-0653">Protein transport</keyword>
<keyword id="KW-1185">Reference proteome</keyword>
<keyword id="KW-0732">Signal</keyword>
<keyword id="KW-0812">Transmembrane</keyword>
<keyword id="KW-1133">Transmembrane helix</keyword>
<keyword id="KW-0813">Transport</keyword>
<accession>P32803</accession>
<accession>D6VTV4</accession>
<sequence length="203" mass="23332">MASFATKFVIACFLFFSASAHNVLLPAYGRRCFFEDLSKGDELSISFQFGDRNPQSSSQLTGDFIIYGPERHEVLKTVRDTSHGEITLSAPYKGHFQYCFLNENTGIETKDVTFNIHGVVYVDLDDPNTNTLDSAVRKLSKLTREVKDEQSYIVIRERTHRNTAESTNDRVKWWSIFQLGVVIANSLFQIYYLRRFFEVTSLV</sequence>
<proteinExistence type="evidence at protein level"/>
<dbReference type="EMBL" id="X67317">
    <property type="protein sequence ID" value="CAA47731.1"/>
    <property type="molecule type" value="Genomic_DNA"/>
</dbReference>
<dbReference type="EMBL" id="Z72722">
    <property type="protein sequence ID" value="CAA96912.1"/>
    <property type="molecule type" value="Genomic_DNA"/>
</dbReference>
<dbReference type="EMBL" id="X91837">
    <property type="protein sequence ID" value="CAA62944.1"/>
    <property type="molecule type" value="Genomic_DNA"/>
</dbReference>
<dbReference type="EMBL" id="BK006941">
    <property type="protein sequence ID" value="DAA07915.1"/>
    <property type="molecule type" value="Genomic_DNA"/>
</dbReference>
<dbReference type="PIR" id="S25109">
    <property type="entry name" value="S25109"/>
</dbReference>
<dbReference type="RefSeq" id="NP_011315.3">
    <property type="nucleotide sequence ID" value="NM_001181065.3"/>
</dbReference>
<dbReference type="SMR" id="P32803"/>
<dbReference type="BioGRID" id="33058">
    <property type="interactions" value="252"/>
</dbReference>
<dbReference type="ComplexPortal" id="CPX-1698">
    <property type="entry name" value="EMP24 complex"/>
</dbReference>
<dbReference type="DIP" id="DIP-2856N"/>
<dbReference type="ELM" id="P32803"/>
<dbReference type="FunCoup" id="P32803">
    <property type="interactions" value="1141"/>
</dbReference>
<dbReference type="IntAct" id="P32803">
    <property type="interactions" value="64"/>
</dbReference>
<dbReference type="MINT" id="P32803"/>
<dbReference type="STRING" id="4932.YGL200C"/>
<dbReference type="iPTMnet" id="P32803"/>
<dbReference type="PaxDb" id="4932-YGL200C"/>
<dbReference type="PeptideAtlas" id="P32803"/>
<dbReference type="TopDownProteomics" id="P32803"/>
<dbReference type="EnsemblFungi" id="YGL200C_mRNA">
    <property type="protein sequence ID" value="YGL200C"/>
    <property type="gene ID" value="YGL200C"/>
</dbReference>
<dbReference type="GeneID" id="852675"/>
<dbReference type="KEGG" id="sce:YGL200C"/>
<dbReference type="AGR" id="SGD:S000003168"/>
<dbReference type="SGD" id="S000003168">
    <property type="gene designation" value="EMP24"/>
</dbReference>
<dbReference type="VEuPathDB" id="FungiDB:YGL200C"/>
<dbReference type="eggNOG" id="KOG1692">
    <property type="taxonomic scope" value="Eukaryota"/>
</dbReference>
<dbReference type="GeneTree" id="ENSGT00940000175999"/>
<dbReference type="HOGENOM" id="CLU_066963_4_0_1"/>
<dbReference type="InParanoid" id="P32803"/>
<dbReference type="OMA" id="MQVRDRN"/>
<dbReference type="OrthoDB" id="62956at2759"/>
<dbReference type="BioCyc" id="YEAST:G3O-30680-MONOMER"/>
<dbReference type="Reactome" id="R-SCE-6807878">
    <property type="pathway name" value="COPI-mediated anterograde transport"/>
</dbReference>
<dbReference type="Reactome" id="R-SCE-6811434">
    <property type="pathway name" value="COPI-dependent Golgi-to-ER retrograde traffic"/>
</dbReference>
<dbReference type="BioGRID-ORCS" id="852675">
    <property type="hits" value="0 hits in 10 CRISPR screens"/>
</dbReference>
<dbReference type="PRO" id="PR:P32803"/>
<dbReference type="Proteomes" id="UP000002311">
    <property type="component" value="Chromosome VII"/>
</dbReference>
<dbReference type="RNAct" id="P32803">
    <property type="molecule type" value="protein"/>
</dbReference>
<dbReference type="GO" id="GO:0030134">
    <property type="term" value="C:COPII-coated ER to Golgi transport vesicle"/>
    <property type="evidence" value="ECO:0000314"/>
    <property type="project" value="SGD"/>
</dbReference>
<dbReference type="GO" id="GO:0005783">
    <property type="term" value="C:endoplasmic reticulum"/>
    <property type="evidence" value="ECO:0000314"/>
    <property type="project" value="SGD"/>
</dbReference>
<dbReference type="GO" id="GO:0005789">
    <property type="term" value="C:endoplasmic reticulum membrane"/>
    <property type="evidence" value="ECO:0000303"/>
    <property type="project" value="ComplexPortal"/>
</dbReference>
<dbReference type="GO" id="GO:0005793">
    <property type="term" value="C:endoplasmic reticulum-Golgi intermediate compartment"/>
    <property type="evidence" value="ECO:0000318"/>
    <property type="project" value="GO_Central"/>
</dbReference>
<dbReference type="GO" id="GO:0005794">
    <property type="term" value="C:Golgi apparatus"/>
    <property type="evidence" value="ECO:0000318"/>
    <property type="project" value="GO_Central"/>
</dbReference>
<dbReference type="GO" id="GO:0000139">
    <property type="term" value="C:Golgi membrane"/>
    <property type="evidence" value="ECO:0007669"/>
    <property type="project" value="UniProtKB-SubCell"/>
</dbReference>
<dbReference type="GO" id="GO:0005798">
    <property type="term" value="C:Golgi-associated vesicle"/>
    <property type="evidence" value="ECO:0000303"/>
    <property type="project" value="ComplexPortal"/>
</dbReference>
<dbReference type="GO" id="GO:0006888">
    <property type="term" value="P:endoplasmic reticulum to Golgi vesicle-mediated transport"/>
    <property type="evidence" value="ECO:0000315"/>
    <property type="project" value="SGD"/>
</dbReference>
<dbReference type="GO" id="GO:0007030">
    <property type="term" value="P:Golgi organization"/>
    <property type="evidence" value="ECO:0000318"/>
    <property type="project" value="GO_Central"/>
</dbReference>
<dbReference type="GO" id="GO:0006886">
    <property type="term" value="P:intracellular protein transport"/>
    <property type="evidence" value="ECO:0000318"/>
    <property type="project" value="GO_Central"/>
</dbReference>
<dbReference type="GO" id="GO:0006621">
    <property type="term" value="P:protein retention in ER lumen"/>
    <property type="evidence" value="ECO:0000315"/>
    <property type="project" value="SGD"/>
</dbReference>
<dbReference type="GO" id="GO:0006900">
    <property type="term" value="P:vesicle budding from membrane"/>
    <property type="evidence" value="ECO:0000303"/>
    <property type="project" value="ComplexPortal"/>
</dbReference>
<dbReference type="GO" id="GO:0016050">
    <property type="term" value="P:vesicle organization"/>
    <property type="evidence" value="ECO:0000315"/>
    <property type="project" value="SGD"/>
</dbReference>
<dbReference type="InterPro" id="IPR015720">
    <property type="entry name" value="Emp24-like"/>
</dbReference>
<dbReference type="InterPro" id="IPR009038">
    <property type="entry name" value="GOLD_dom"/>
</dbReference>
<dbReference type="InterPro" id="IPR036598">
    <property type="entry name" value="GOLD_dom_sf"/>
</dbReference>
<dbReference type="PANTHER" id="PTHR22811">
    <property type="entry name" value="TRANSMEMBRANE EMP24 DOMAIN-CONTAINING PROTEIN"/>
    <property type="match status" value="1"/>
</dbReference>
<dbReference type="Pfam" id="PF01105">
    <property type="entry name" value="EMP24_GP25L"/>
    <property type="match status" value="1"/>
</dbReference>
<dbReference type="SMART" id="SM01190">
    <property type="entry name" value="EMP24_GP25L"/>
    <property type="match status" value="1"/>
</dbReference>
<dbReference type="SUPFAM" id="SSF101576">
    <property type="entry name" value="Supernatant protein factor (SPF), C-terminal domain"/>
    <property type="match status" value="1"/>
</dbReference>
<dbReference type="PROSITE" id="PS50866">
    <property type="entry name" value="GOLD"/>
    <property type="match status" value="1"/>
</dbReference>